<feature type="chain" id="PRO_1000084658" description="tRNA pseudouridine synthase B">
    <location>
        <begin position="1"/>
        <end position="305"/>
    </location>
</feature>
<feature type="active site" description="Nucleophile" evidence="1">
    <location>
        <position position="50"/>
    </location>
</feature>
<name>TRUB_RHOJR</name>
<accession>Q0S212</accession>
<dbReference type="EC" id="5.4.99.25" evidence="1"/>
<dbReference type="EMBL" id="CP000431">
    <property type="protein sequence ID" value="ABG98424.1"/>
    <property type="molecule type" value="Genomic_DNA"/>
</dbReference>
<dbReference type="RefSeq" id="WP_011598477.1">
    <property type="nucleotide sequence ID" value="NC_008268.1"/>
</dbReference>
<dbReference type="SMR" id="Q0S212"/>
<dbReference type="KEGG" id="rha:RHA1_ro06651"/>
<dbReference type="PATRIC" id="fig|101510.16.peg.6711"/>
<dbReference type="eggNOG" id="COG0130">
    <property type="taxonomic scope" value="Bacteria"/>
</dbReference>
<dbReference type="HOGENOM" id="CLU_032087_0_0_11"/>
<dbReference type="OrthoDB" id="9802309at2"/>
<dbReference type="Proteomes" id="UP000008710">
    <property type="component" value="Chromosome"/>
</dbReference>
<dbReference type="GO" id="GO:0003723">
    <property type="term" value="F:RNA binding"/>
    <property type="evidence" value="ECO:0007669"/>
    <property type="project" value="InterPro"/>
</dbReference>
<dbReference type="GO" id="GO:0160148">
    <property type="term" value="F:tRNA pseudouridine(55) synthase activity"/>
    <property type="evidence" value="ECO:0007669"/>
    <property type="project" value="UniProtKB-EC"/>
</dbReference>
<dbReference type="GO" id="GO:1990481">
    <property type="term" value="P:mRNA pseudouridine synthesis"/>
    <property type="evidence" value="ECO:0007669"/>
    <property type="project" value="TreeGrafter"/>
</dbReference>
<dbReference type="GO" id="GO:0031119">
    <property type="term" value="P:tRNA pseudouridine synthesis"/>
    <property type="evidence" value="ECO:0007669"/>
    <property type="project" value="UniProtKB-UniRule"/>
</dbReference>
<dbReference type="CDD" id="cd02573">
    <property type="entry name" value="PseudoU_synth_EcTruB"/>
    <property type="match status" value="1"/>
</dbReference>
<dbReference type="FunFam" id="3.30.2350.10:FF:000011">
    <property type="entry name" value="tRNA pseudouridine synthase B"/>
    <property type="match status" value="1"/>
</dbReference>
<dbReference type="Gene3D" id="3.30.2350.10">
    <property type="entry name" value="Pseudouridine synthase"/>
    <property type="match status" value="1"/>
</dbReference>
<dbReference type="Gene3D" id="2.30.130.10">
    <property type="entry name" value="PUA domain"/>
    <property type="match status" value="1"/>
</dbReference>
<dbReference type="HAMAP" id="MF_01080">
    <property type="entry name" value="TruB_bact"/>
    <property type="match status" value="1"/>
</dbReference>
<dbReference type="InterPro" id="IPR020103">
    <property type="entry name" value="PsdUridine_synth_cat_dom_sf"/>
</dbReference>
<dbReference type="InterPro" id="IPR002501">
    <property type="entry name" value="PsdUridine_synth_N"/>
</dbReference>
<dbReference type="InterPro" id="IPR015947">
    <property type="entry name" value="PUA-like_sf"/>
</dbReference>
<dbReference type="InterPro" id="IPR036974">
    <property type="entry name" value="PUA_sf"/>
</dbReference>
<dbReference type="InterPro" id="IPR015225">
    <property type="entry name" value="tRNA_psdUridine_synth_fam2_C"/>
</dbReference>
<dbReference type="InterPro" id="IPR014780">
    <property type="entry name" value="tRNA_psdUridine_synth_TruB"/>
</dbReference>
<dbReference type="InterPro" id="IPR032819">
    <property type="entry name" value="TruB_C"/>
</dbReference>
<dbReference type="NCBIfam" id="TIGR00431">
    <property type="entry name" value="TruB"/>
    <property type="match status" value="1"/>
</dbReference>
<dbReference type="PANTHER" id="PTHR13767:SF2">
    <property type="entry name" value="PSEUDOURIDYLATE SYNTHASE TRUB1"/>
    <property type="match status" value="1"/>
</dbReference>
<dbReference type="PANTHER" id="PTHR13767">
    <property type="entry name" value="TRNA-PSEUDOURIDINE SYNTHASE"/>
    <property type="match status" value="1"/>
</dbReference>
<dbReference type="Pfam" id="PF09142">
    <property type="entry name" value="TruB_C"/>
    <property type="match status" value="1"/>
</dbReference>
<dbReference type="Pfam" id="PF16198">
    <property type="entry name" value="TruB_C_2"/>
    <property type="match status" value="1"/>
</dbReference>
<dbReference type="Pfam" id="PF01509">
    <property type="entry name" value="TruB_N"/>
    <property type="match status" value="1"/>
</dbReference>
<dbReference type="SUPFAM" id="SSF55120">
    <property type="entry name" value="Pseudouridine synthase"/>
    <property type="match status" value="1"/>
</dbReference>
<dbReference type="SUPFAM" id="SSF88697">
    <property type="entry name" value="PUA domain-like"/>
    <property type="match status" value="1"/>
</dbReference>
<organism>
    <name type="scientific">Rhodococcus jostii (strain RHA1)</name>
    <dbReference type="NCBI Taxonomy" id="101510"/>
    <lineage>
        <taxon>Bacteria</taxon>
        <taxon>Bacillati</taxon>
        <taxon>Actinomycetota</taxon>
        <taxon>Actinomycetes</taxon>
        <taxon>Mycobacteriales</taxon>
        <taxon>Nocardiaceae</taxon>
        <taxon>Rhodococcus</taxon>
    </lineage>
</organism>
<reference key="1">
    <citation type="journal article" date="2006" name="Proc. Natl. Acad. Sci. U.S.A.">
        <title>The complete genome of Rhodococcus sp. RHA1 provides insights into a catabolic powerhouse.</title>
        <authorList>
            <person name="McLeod M.P."/>
            <person name="Warren R.L."/>
            <person name="Hsiao W.W.L."/>
            <person name="Araki N."/>
            <person name="Myhre M."/>
            <person name="Fernandes C."/>
            <person name="Miyazawa D."/>
            <person name="Wong W."/>
            <person name="Lillquist A.L."/>
            <person name="Wang D."/>
            <person name="Dosanjh M."/>
            <person name="Hara H."/>
            <person name="Petrescu A."/>
            <person name="Morin R.D."/>
            <person name="Yang G."/>
            <person name="Stott J.M."/>
            <person name="Schein J.E."/>
            <person name="Shin H."/>
            <person name="Smailus D."/>
            <person name="Siddiqui A.S."/>
            <person name="Marra M.A."/>
            <person name="Jones S.J.M."/>
            <person name="Holt R."/>
            <person name="Brinkman F.S.L."/>
            <person name="Miyauchi K."/>
            <person name="Fukuda M."/>
            <person name="Davies J.E."/>
            <person name="Mohn W.W."/>
            <person name="Eltis L.D."/>
        </authorList>
    </citation>
    <scope>NUCLEOTIDE SEQUENCE [LARGE SCALE GENOMIC DNA]</scope>
    <source>
        <strain>RHA1</strain>
    </source>
</reference>
<comment type="function">
    <text evidence="1">Responsible for synthesis of pseudouridine from uracil-55 in the psi GC loop of transfer RNAs.</text>
</comment>
<comment type="catalytic activity">
    <reaction evidence="1">
        <text>uridine(55) in tRNA = pseudouridine(55) in tRNA</text>
        <dbReference type="Rhea" id="RHEA:42532"/>
        <dbReference type="Rhea" id="RHEA-COMP:10101"/>
        <dbReference type="Rhea" id="RHEA-COMP:10102"/>
        <dbReference type="ChEBI" id="CHEBI:65314"/>
        <dbReference type="ChEBI" id="CHEBI:65315"/>
        <dbReference type="EC" id="5.4.99.25"/>
    </reaction>
</comment>
<comment type="similarity">
    <text evidence="1">Belongs to the pseudouridine synthase TruB family. Type 1 subfamily.</text>
</comment>
<evidence type="ECO:0000255" key="1">
    <source>
        <dbReference type="HAMAP-Rule" id="MF_01080"/>
    </source>
</evidence>
<proteinExistence type="inferred from homology"/>
<sequence length="305" mass="32186">MSAREKPSSGLVGAGLLIVDKDAGVTSHDVVARCRKLLGTRKVGHAGTLDPMATGVLVLGVERATKLLGFLALTTKAYTATIRLGQATTTDDAEGEVVASADASGVTDEEIAAQVHTLTGDIQQIPSSVSAIKVDGRRAHALIRAGEEFELAPRSVTVSRFEVVARRTEGAFVDVDVEVECSSGTYVRALARDLGIALIGVGGHLTSLRRTRVGPFTLEHARTLEQLAEEPGVSLDIDAAAQTAFPHRQVDADEAESISQGRWLEPIGIKGVYAAIDPSGHTIALLQERGRRASSVMVVRPATLR</sequence>
<keyword id="KW-0413">Isomerase</keyword>
<keyword id="KW-0819">tRNA processing</keyword>
<gene>
    <name evidence="1" type="primary">truB</name>
    <name type="ordered locus">RHA1_ro06651</name>
</gene>
<protein>
    <recommendedName>
        <fullName evidence="1">tRNA pseudouridine synthase B</fullName>
        <ecNumber evidence="1">5.4.99.25</ecNumber>
    </recommendedName>
    <alternativeName>
        <fullName evidence="1">tRNA pseudouridine(55) synthase</fullName>
        <shortName evidence="1">Psi55 synthase</shortName>
    </alternativeName>
    <alternativeName>
        <fullName evidence="1">tRNA pseudouridylate synthase</fullName>
    </alternativeName>
    <alternativeName>
        <fullName evidence="1">tRNA-uridine isomerase</fullName>
    </alternativeName>
</protein>